<sequence>MAVEILNESGIEVPEDALLRMARHVYARLHVHERAETAVTVVDAARMAELHEEWMDLPGPTDVMSLPMDELTPGSPEAPAEGVLGDVVLCPEVAAEQAARGGHSRDDELLLLLTHGMLHLLGYDHVEDAEREEMFTLQDRLVSEVLGRPAPAPTVED</sequence>
<name>YBEY_MICLC</name>
<protein>
    <recommendedName>
        <fullName evidence="1">Endoribonuclease YbeY</fullName>
        <ecNumber evidence="1">3.1.-.-</ecNumber>
    </recommendedName>
</protein>
<organism>
    <name type="scientific">Micrococcus luteus (strain ATCC 4698 / DSM 20030 / JCM 1464 / CCM 169 / CCUG 5858 / IAM 1056 / NBRC 3333 / NCIMB 9278 / NCTC 2665 / VKM Ac-2230)</name>
    <name type="common">Micrococcus lysodeikticus</name>
    <dbReference type="NCBI Taxonomy" id="465515"/>
    <lineage>
        <taxon>Bacteria</taxon>
        <taxon>Bacillati</taxon>
        <taxon>Actinomycetota</taxon>
        <taxon>Actinomycetes</taxon>
        <taxon>Micrococcales</taxon>
        <taxon>Micrococcaceae</taxon>
        <taxon>Micrococcus</taxon>
    </lineage>
</organism>
<keyword id="KW-0963">Cytoplasm</keyword>
<keyword id="KW-0255">Endonuclease</keyword>
<keyword id="KW-0378">Hydrolase</keyword>
<keyword id="KW-0479">Metal-binding</keyword>
<keyword id="KW-0540">Nuclease</keyword>
<keyword id="KW-1185">Reference proteome</keyword>
<keyword id="KW-0690">Ribosome biogenesis</keyword>
<keyword id="KW-0698">rRNA processing</keyword>
<keyword id="KW-0862">Zinc</keyword>
<dbReference type="EC" id="3.1.-.-" evidence="1"/>
<dbReference type="EMBL" id="CP001628">
    <property type="protein sequence ID" value="ACS30738.1"/>
    <property type="molecule type" value="Genomic_DNA"/>
</dbReference>
<dbReference type="RefSeq" id="WP_010078622.1">
    <property type="nucleotide sequence ID" value="NZ_WBMF01000030.1"/>
</dbReference>
<dbReference type="SMR" id="C5CCC6"/>
<dbReference type="STRING" id="465515.Mlut_12330"/>
<dbReference type="EnsemblBacteria" id="ACS30738">
    <property type="protein sequence ID" value="ACS30738"/>
    <property type="gene ID" value="Mlut_12330"/>
</dbReference>
<dbReference type="GeneID" id="93345390"/>
<dbReference type="KEGG" id="mlu:Mlut_12330"/>
<dbReference type="eggNOG" id="COG0319">
    <property type="taxonomic scope" value="Bacteria"/>
</dbReference>
<dbReference type="HOGENOM" id="CLU_106710_3_2_11"/>
<dbReference type="Proteomes" id="UP000000738">
    <property type="component" value="Chromosome"/>
</dbReference>
<dbReference type="GO" id="GO:0005737">
    <property type="term" value="C:cytoplasm"/>
    <property type="evidence" value="ECO:0007669"/>
    <property type="project" value="UniProtKB-SubCell"/>
</dbReference>
<dbReference type="GO" id="GO:0004222">
    <property type="term" value="F:metalloendopeptidase activity"/>
    <property type="evidence" value="ECO:0007669"/>
    <property type="project" value="InterPro"/>
</dbReference>
<dbReference type="GO" id="GO:0004521">
    <property type="term" value="F:RNA endonuclease activity"/>
    <property type="evidence" value="ECO:0007669"/>
    <property type="project" value="UniProtKB-UniRule"/>
</dbReference>
<dbReference type="GO" id="GO:0008270">
    <property type="term" value="F:zinc ion binding"/>
    <property type="evidence" value="ECO:0007669"/>
    <property type="project" value="UniProtKB-UniRule"/>
</dbReference>
<dbReference type="GO" id="GO:0006364">
    <property type="term" value="P:rRNA processing"/>
    <property type="evidence" value="ECO:0007669"/>
    <property type="project" value="UniProtKB-UniRule"/>
</dbReference>
<dbReference type="Gene3D" id="3.40.390.30">
    <property type="entry name" value="Metalloproteases ('zincins'), catalytic domain"/>
    <property type="match status" value="1"/>
</dbReference>
<dbReference type="HAMAP" id="MF_00009">
    <property type="entry name" value="Endoribonucl_YbeY"/>
    <property type="match status" value="1"/>
</dbReference>
<dbReference type="InterPro" id="IPR023091">
    <property type="entry name" value="MetalPrtase_cat_dom_sf_prd"/>
</dbReference>
<dbReference type="InterPro" id="IPR002036">
    <property type="entry name" value="YbeY"/>
</dbReference>
<dbReference type="InterPro" id="IPR020549">
    <property type="entry name" value="YbeY_CS"/>
</dbReference>
<dbReference type="NCBIfam" id="TIGR00043">
    <property type="entry name" value="rRNA maturation RNase YbeY"/>
    <property type="match status" value="1"/>
</dbReference>
<dbReference type="PANTHER" id="PTHR46986">
    <property type="entry name" value="ENDORIBONUCLEASE YBEY, CHLOROPLASTIC"/>
    <property type="match status" value="1"/>
</dbReference>
<dbReference type="PANTHER" id="PTHR46986:SF1">
    <property type="entry name" value="ENDORIBONUCLEASE YBEY, CHLOROPLASTIC"/>
    <property type="match status" value="1"/>
</dbReference>
<dbReference type="Pfam" id="PF02130">
    <property type="entry name" value="YbeY"/>
    <property type="match status" value="1"/>
</dbReference>
<dbReference type="SUPFAM" id="SSF55486">
    <property type="entry name" value="Metalloproteases ('zincins'), catalytic domain"/>
    <property type="match status" value="1"/>
</dbReference>
<dbReference type="PROSITE" id="PS01306">
    <property type="entry name" value="UPF0054"/>
    <property type="match status" value="1"/>
</dbReference>
<accession>C5CCC6</accession>
<feature type="chain" id="PRO_1000201740" description="Endoribonuclease YbeY">
    <location>
        <begin position="1"/>
        <end position="157"/>
    </location>
</feature>
<feature type="binding site" evidence="1">
    <location>
        <position position="115"/>
    </location>
    <ligand>
        <name>Zn(2+)</name>
        <dbReference type="ChEBI" id="CHEBI:29105"/>
        <note>catalytic</note>
    </ligand>
</feature>
<feature type="binding site" evidence="1">
    <location>
        <position position="119"/>
    </location>
    <ligand>
        <name>Zn(2+)</name>
        <dbReference type="ChEBI" id="CHEBI:29105"/>
        <note>catalytic</note>
    </ligand>
</feature>
<feature type="binding site" evidence="1">
    <location>
        <position position="125"/>
    </location>
    <ligand>
        <name>Zn(2+)</name>
        <dbReference type="ChEBI" id="CHEBI:29105"/>
        <note>catalytic</note>
    </ligand>
</feature>
<comment type="function">
    <text evidence="1">Single strand-specific metallo-endoribonuclease involved in late-stage 70S ribosome quality control and in maturation of the 3' terminus of the 16S rRNA.</text>
</comment>
<comment type="cofactor">
    <cofactor evidence="1">
        <name>Zn(2+)</name>
        <dbReference type="ChEBI" id="CHEBI:29105"/>
    </cofactor>
    <text evidence="1">Binds 1 zinc ion.</text>
</comment>
<comment type="subcellular location">
    <subcellularLocation>
        <location evidence="1">Cytoplasm</location>
    </subcellularLocation>
</comment>
<comment type="similarity">
    <text evidence="1">Belongs to the endoribonuclease YbeY family.</text>
</comment>
<gene>
    <name evidence="1" type="primary">ybeY</name>
    <name type="ordered locus">Mlut_12330</name>
</gene>
<proteinExistence type="inferred from homology"/>
<reference key="1">
    <citation type="journal article" date="2010" name="J. Bacteriol.">
        <title>Genome sequence of the Fleming strain of Micrococcus luteus, a simple free-living actinobacterium.</title>
        <authorList>
            <person name="Young M."/>
            <person name="Artsatbanov V."/>
            <person name="Beller H.R."/>
            <person name="Chandra G."/>
            <person name="Chater K.F."/>
            <person name="Dover L.G."/>
            <person name="Goh E.B."/>
            <person name="Kahan T."/>
            <person name="Kaprelyants A.S."/>
            <person name="Kyrpides N."/>
            <person name="Lapidus A."/>
            <person name="Lowry S.R."/>
            <person name="Lykidis A."/>
            <person name="Mahillon J."/>
            <person name="Markowitz V."/>
            <person name="Mavromatis K."/>
            <person name="Mukamolova G.V."/>
            <person name="Oren A."/>
            <person name="Rokem J.S."/>
            <person name="Smith M.C."/>
            <person name="Young D.I."/>
            <person name="Greenblatt C.L."/>
        </authorList>
    </citation>
    <scope>NUCLEOTIDE SEQUENCE [LARGE SCALE GENOMIC DNA]</scope>
    <source>
        <strain>ATCC 4698 / DSM 20030 / JCM 1464 / CCM 169 / CCUG 5858 / IAM 1056 / NBRC 3333 / NCIMB 9278 / NCTC 2665 / VKM Ac-2230</strain>
    </source>
</reference>
<evidence type="ECO:0000255" key="1">
    <source>
        <dbReference type="HAMAP-Rule" id="MF_00009"/>
    </source>
</evidence>